<evidence type="ECO:0000250" key="1"/>
<evidence type="ECO:0000255" key="2">
    <source>
        <dbReference type="PROSITE-ProRule" id="PRU00108"/>
    </source>
</evidence>
<evidence type="ECO:0000256" key="3">
    <source>
        <dbReference type="SAM" id="MobiDB-lite"/>
    </source>
</evidence>
<evidence type="ECO:0000305" key="4"/>
<organism>
    <name type="scientific">Oryza sativa subsp. japonica</name>
    <name type="common">Rice</name>
    <dbReference type="NCBI Taxonomy" id="39947"/>
    <lineage>
        <taxon>Eukaryota</taxon>
        <taxon>Viridiplantae</taxon>
        <taxon>Streptophyta</taxon>
        <taxon>Embryophyta</taxon>
        <taxon>Tracheophyta</taxon>
        <taxon>Spermatophyta</taxon>
        <taxon>Magnoliopsida</taxon>
        <taxon>Liliopsida</taxon>
        <taxon>Poales</taxon>
        <taxon>Poaceae</taxon>
        <taxon>BOP clade</taxon>
        <taxon>Oryzoideae</taxon>
        <taxon>Oryzeae</taxon>
        <taxon>Oryzinae</taxon>
        <taxon>Oryza</taxon>
        <taxon>Oryza sativa</taxon>
    </lineage>
</organism>
<comment type="function">
    <text evidence="1">Transcription factor which may be involved in developmental processes.</text>
</comment>
<comment type="subcellular location">
    <subcellularLocation>
        <location evidence="2">Nucleus</location>
    </subcellularLocation>
</comment>
<comment type="similarity">
    <text evidence="4">Belongs to the WUS homeobox family.</text>
</comment>
<comment type="sequence caution" evidence="4">
    <conflict type="erroneous gene model prediction">
        <sequence resource="EMBL-CDS" id="BAF15996"/>
    </conflict>
</comment>
<comment type="sequence caution" evidence="4">
    <conflict type="frameshift">
        <sequence resource="EMBL-CDS" id="CAD88982"/>
    </conflict>
</comment>
<accession>Q7XTV3</accession>
<accession>A0AAT1</accession>
<accession>Q0J9J1</accession>
<accession>Q70Q05</accession>
<accession>Q7X7F6</accession>
<protein>
    <recommendedName>
        <fullName>WUSCHEL-related homeobox 4</fullName>
    </recommendedName>
    <alternativeName>
        <fullName>OsWOX4</fullName>
    </alternativeName>
</protein>
<gene>
    <name type="primary">WOX4</name>
    <name type="synonym">HB3</name>
    <name type="ordered locus">Os04g0649400</name>
    <name type="ordered locus">LOC_Os04g55590</name>
    <name type="ORF">OsJ_015698</name>
    <name type="ORF">OSJNBa0010D21.16</name>
    <name type="ORF">OSJNBb0059K02.2</name>
</gene>
<keyword id="KW-0217">Developmental protein</keyword>
<keyword id="KW-0238">DNA-binding</keyword>
<keyword id="KW-0371">Homeobox</keyword>
<keyword id="KW-0539">Nucleus</keyword>
<keyword id="KW-1185">Reference proteome</keyword>
<keyword id="KW-0804">Transcription</keyword>
<keyword id="KW-0805">Transcription regulation</keyword>
<name>WOX4_ORYSJ</name>
<dbReference type="EMBL" id="AJ556181">
    <property type="protein sequence ID" value="CAD88982.1"/>
    <property type="status" value="ALT_FRAME"/>
    <property type="molecule type" value="mRNA"/>
</dbReference>
<dbReference type="EMBL" id="AL606635">
    <property type="protein sequence ID" value="CAD41713.2"/>
    <property type="molecule type" value="Genomic_DNA"/>
</dbReference>
<dbReference type="EMBL" id="AL606692">
    <property type="protein sequence ID" value="CAE04492.1"/>
    <property type="molecule type" value="Genomic_DNA"/>
</dbReference>
<dbReference type="EMBL" id="AP008210">
    <property type="protein sequence ID" value="BAF15996.1"/>
    <property type="status" value="ALT_SEQ"/>
    <property type="molecule type" value="Genomic_DNA"/>
</dbReference>
<dbReference type="EMBL" id="AP014960">
    <property type="protein sequence ID" value="BAS91342.1"/>
    <property type="molecule type" value="Genomic_DNA"/>
</dbReference>
<dbReference type="EMBL" id="CM000141">
    <property type="protein sequence ID" value="EAZ32215.1"/>
    <property type="molecule type" value="Genomic_DNA"/>
</dbReference>
<dbReference type="EMBL" id="AM234750">
    <property type="protein sequence ID" value="CAJ84142.1"/>
    <property type="molecule type" value="mRNA"/>
</dbReference>
<dbReference type="RefSeq" id="XP_015635367.1">
    <property type="nucleotide sequence ID" value="XM_015779881.1"/>
</dbReference>
<dbReference type="SMR" id="Q7XTV3"/>
<dbReference type="FunCoup" id="Q7XTV3">
    <property type="interactions" value="1016"/>
</dbReference>
<dbReference type="STRING" id="39947.Q7XTV3"/>
<dbReference type="PaxDb" id="39947-Q7XTV3"/>
<dbReference type="EnsemblPlants" id="Os04t0649400-01">
    <property type="protein sequence ID" value="Os04t0649400-01"/>
    <property type="gene ID" value="Os04g0649400"/>
</dbReference>
<dbReference type="Gramene" id="Os04t0649400-01">
    <property type="protein sequence ID" value="Os04t0649400-01"/>
    <property type="gene ID" value="Os04g0649400"/>
</dbReference>
<dbReference type="KEGG" id="dosa:Os04g0649400"/>
<dbReference type="eggNOG" id="ENOG502R34Q">
    <property type="taxonomic scope" value="Eukaryota"/>
</dbReference>
<dbReference type="HOGENOM" id="CLU_106029_0_0_1"/>
<dbReference type="InParanoid" id="Q7XTV3"/>
<dbReference type="OrthoDB" id="768142at2759"/>
<dbReference type="Proteomes" id="UP000000763">
    <property type="component" value="Chromosome 4"/>
</dbReference>
<dbReference type="Proteomes" id="UP000007752">
    <property type="component" value="Chromosome 4"/>
</dbReference>
<dbReference type="Proteomes" id="UP000059680">
    <property type="component" value="Chromosome 4"/>
</dbReference>
<dbReference type="ExpressionAtlas" id="Q7XTV3">
    <property type="expression patterns" value="baseline and differential"/>
</dbReference>
<dbReference type="GO" id="GO:0005634">
    <property type="term" value="C:nucleus"/>
    <property type="evidence" value="ECO:0000318"/>
    <property type="project" value="GO_Central"/>
</dbReference>
<dbReference type="GO" id="GO:0003677">
    <property type="term" value="F:DNA binding"/>
    <property type="evidence" value="ECO:0007669"/>
    <property type="project" value="UniProtKB-KW"/>
</dbReference>
<dbReference type="GO" id="GO:0003700">
    <property type="term" value="F:DNA-binding transcription factor activity"/>
    <property type="evidence" value="ECO:0007669"/>
    <property type="project" value="InterPro"/>
</dbReference>
<dbReference type="GO" id="GO:0051301">
    <property type="term" value="P:cell division"/>
    <property type="evidence" value="ECO:0007669"/>
    <property type="project" value="EnsemblPlants"/>
</dbReference>
<dbReference type="GO" id="GO:0010087">
    <property type="term" value="P:phloem or xylem histogenesis"/>
    <property type="evidence" value="ECO:0007669"/>
    <property type="project" value="EnsemblPlants"/>
</dbReference>
<dbReference type="GO" id="GO:0010067">
    <property type="term" value="P:procambium histogenesis"/>
    <property type="evidence" value="ECO:0007669"/>
    <property type="project" value="EnsemblPlants"/>
</dbReference>
<dbReference type="GO" id="GO:0007165">
    <property type="term" value="P:signal transduction"/>
    <property type="evidence" value="ECO:0007669"/>
    <property type="project" value="EnsemblPlants"/>
</dbReference>
<dbReference type="GO" id="GO:0009888">
    <property type="term" value="P:tissue development"/>
    <property type="evidence" value="ECO:0000318"/>
    <property type="project" value="GO_Central"/>
</dbReference>
<dbReference type="CDD" id="cd00086">
    <property type="entry name" value="homeodomain"/>
    <property type="match status" value="1"/>
</dbReference>
<dbReference type="FunFam" id="1.10.10.60:FF:000146">
    <property type="entry name" value="WUSCHEL-related homeobox 4"/>
    <property type="match status" value="1"/>
</dbReference>
<dbReference type="Gene3D" id="1.10.10.60">
    <property type="entry name" value="Homeodomain-like"/>
    <property type="match status" value="1"/>
</dbReference>
<dbReference type="InterPro" id="IPR001356">
    <property type="entry name" value="HD"/>
</dbReference>
<dbReference type="InterPro" id="IPR009057">
    <property type="entry name" value="Homeodomain-like_sf"/>
</dbReference>
<dbReference type="InterPro" id="IPR044186">
    <property type="entry name" value="WOX4"/>
</dbReference>
<dbReference type="PANTHER" id="PTHR47716">
    <property type="entry name" value="WUSCHEL-RELATED HOMEOBOX 4"/>
    <property type="match status" value="1"/>
</dbReference>
<dbReference type="PANTHER" id="PTHR47716:SF1">
    <property type="entry name" value="WUSCHEL-RELATED HOMEOBOX 4"/>
    <property type="match status" value="1"/>
</dbReference>
<dbReference type="Pfam" id="PF00046">
    <property type="entry name" value="Homeodomain"/>
    <property type="match status" value="1"/>
</dbReference>
<dbReference type="SMART" id="SM00389">
    <property type="entry name" value="HOX"/>
    <property type="match status" value="1"/>
</dbReference>
<dbReference type="SUPFAM" id="SSF46689">
    <property type="entry name" value="Homeodomain-like"/>
    <property type="match status" value="1"/>
</dbReference>
<dbReference type="PROSITE" id="PS50071">
    <property type="entry name" value="HOMEOBOX_2"/>
    <property type="match status" value="1"/>
</dbReference>
<proteinExistence type="evidence at transcript level"/>
<sequence>MRLHHLHVAYLDHKASSSSSSPAPPSISPSSIPGSAAFPAFSFKCLRPLAPKISLPEPRKMIAPPDFVVPRARNASKLLNYTVQVPAAGTTRWNPSAEQIKVLEMLYRGGMRTPNSVQIERITEELGKYGRIEGKNVFYWFQNHKARERQKQKRAALLTLSTLDPSLLPATANETKEAPEKKEKDVEDGLASCKRRCKAWGDGAGDGDAVVATEAAGGCTDEVTLELFPLHPQGKA</sequence>
<feature type="chain" id="PRO_0000308639" description="WUSCHEL-related homeobox 4">
    <location>
        <begin position="1"/>
        <end position="236"/>
    </location>
</feature>
<feature type="DNA-binding region" description="Homeobox; WUS-type" evidence="2">
    <location>
        <begin position="88"/>
        <end position="152"/>
    </location>
</feature>
<feature type="region of interest" description="Disordered" evidence="3">
    <location>
        <begin position="169"/>
        <end position="188"/>
    </location>
</feature>
<feature type="compositionally biased region" description="Basic and acidic residues" evidence="3">
    <location>
        <begin position="174"/>
        <end position="187"/>
    </location>
</feature>
<feature type="sequence conflict" description="In Ref. 1; CAD88982." evidence="4" ref="1">
    <original>S</original>
    <variation>R</variation>
    <location>
        <position position="161"/>
    </location>
</feature>
<reference key="1">
    <citation type="submission" date="2003-04" db="EMBL/GenBank/DDBJ databases">
        <title>A new homeobox gene cloned from rice unmature embryo also has transcripts in pollen mother cell.</title>
        <authorList>
            <person name="Duan K."/>
        </authorList>
    </citation>
    <scope>NUCLEOTIDE SEQUENCE [MRNA]</scope>
</reference>
<reference key="2">
    <citation type="journal article" date="2002" name="Nature">
        <title>Sequence and analysis of rice chromosome 4.</title>
        <authorList>
            <person name="Feng Q."/>
            <person name="Zhang Y."/>
            <person name="Hao P."/>
            <person name="Wang S."/>
            <person name="Fu G."/>
            <person name="Huang Y."/>
            <person name="Li Y."/>
            <person name="Zhu J."/>
            <person name="Liu Y."/>
            <person name="Hu X."/>
            <person name="Jia P."/>
            <person name="Zhang Y."/>
            <person name="Zhao Q."/>
            <person name="Ying K."/>
            <person name="Yu S."/>
            <person name="Tang Y."/>
            <person name="Weng Q."/>
            <person name="Zhang L."/>
            <person name="Lu Y."/>
            <person name="Mu J."/>
            <person name="Lu Y."/>
            <person name="Zhang L.S."/>
            <person name="Yu Z."/>
            <person name="Fan D."/>
            <person name="Liu X."/>
            <person name="Lu T."/>
            <person name="Li C."/>
            <person name="Wu Y."/>
            <person name="Sun T."/>
            <person name="Lei H."/>
            <person name="Li T."/>
            <person name="Hu H."/>
            <person name="Guan J."/>
            <person name="Wu M."/>
            <person name="Zhang R."/>
            <person name="Zhou B."/>
            <person name="Chen Z."/>
            <person name="Chen L."/>
            <person name="Jin Z."/>
            <person name="Wang R."/>
            <person name="Yin H."/>
            <person name="Cai Z."/>
            <person name="Ren S."/>
            <person name="Lv G."/>
            <person name="Gu W."/>
            <person name="Zhu G."/>
            <person name="Tu Y."/>
            <person name="Jia J."/>
            <person name="Zhang Y."/>
            <person name="Chen J."/>
            <person name="Kang H."/>
            <person name="Chen X."/>
            <person name="Shao C."/>
            <person name="Sun Y."/>
            <person name="Hu Q."/>
            <person name="Zhang X."/>
            <person name="Zhang W."/>
            <person name="Wang L."/>
            <person name="Ding C."/>
            <person name="Sheng H."/>
            <person name="Gu J."/>
            <person name="Chen S."/>
            <person name="Ni L."/>
            <person name="Zhu F."/>
            <person name="Chen W."/>
            <person name="Lan L."/>
            <person name="Lai Y."/>
            <person name="Cheng Z."/>
            <person name="Gu M."/>
            <person name="Jiang J."/>
            <person name="Li J."/>
            <person name="Hong G."/>
            <person name="Xue Y."/>
            <person name="Han B."/>
        </authorList>
    </citation>
    <scope>NUCLEOTIDE SEQUENCE [LARGE SCALE GENOMIC DNA]</scope>
    <source>
        <strain>cv. Nipponbare</strain>
    </source>
</reference>
<reference key="3">
    <citation type="journal article" date="2005" name="Nature">
        <title>The map-based sequence of the rice genome.</title>
        <authorList>
            <consortium name="International rice genome sequencing project (IRGSP)"/>
        </authorList>
    </citation>
    <scope>NUCLEOTIDE SEQUENCE [LARGE SCALE GENOMIC DNA]</scope>
    <source>
        <strain>cv. Nipponbare</strain>
    </source>
</reference>
<reference key="4">
    <citation type="journal article" date="2008" name="Nucleic Acids Res.">
        <title>The rice annotation project database (RAP-DB): 2008 update.</title>
        <authorList>
            <consortium name="The rice annotation project (RAP)"/>
        </authorList>
    </citation>
    <scope>GENOME REANNOTATION</scope>
    <source>
        <strain>cv. Nipponbare</strain>
    </source>
</reference>
<reference key="5">
    <citation type="journal article" date="2013" name="Rice">
        <title>Improvement of the Oryza sativa Nipponbare reference genome using next generation sequence and optical map data.</title>
        <authorList>
            <person name="Kawahara Y."/>
            <person name="de la Bastide M."/>
            <person name="Hamilton J.P."/>
            <person name="Kanamori H."/>
            <person name="McCombie W.R."/>
            <person name="Ouyang S."/>
            <person name="Schwartz D.C."/>
            <person name="Tanaka T."/>
            <person name="Wu J."/>
            <person name="Zhou S."/>
            <person name="Childs K.L."/>
            <person name="Davidson R.M."/>
            <person name="Lin H."/>
            <person name="Quesada-Ocampo L."/>
            <person name="Vaillancourt B."/>
            <person name="Sakai H."/>
            <person name="Lee S.S."/>
            <person name="Kim J."/>
            <person name="Numa H."/>
            <person name="Itoh T."/>
            <person name="Buell C.R."/>
            <person name="Matsumoto T."/>
        </authorList>
    </citation>
    <scope>GENOME REANNOTATION</scope>
    <source>
        <strain>cv. Nipponbare</strain>
    </source>
</reference>
<reference key="6">
    <citation type="journal article" date="2005" name="PLoS Biol.">
        <title>The genomes of Oryza sativa: a history of duplications.</title>
        <authorList>
            <person name="Yu J."/>
            <person name="Wang J."/>
            <person name="Lin W."/>
            <person name="Li S."/>
            <person name="Li H."/>
            <person name="Zhou J."/>
            <person name="Ni P."/>
            <person name="Dong W."/>
            <person name="Hu S."/>
            <person name="Zeng C."/>
            <person name="Zhang J."/>
            <person name="Zhang Y."/>
            <person name="Li R."/>
            <person name="Xu Z."/>
            <person name="Li S."/>
            <person name="Li X."/>
            <person name="Zheng H."/>
            <person name="Cong L."/>
            <person name="Lin L."/>
            <person name="Yin J."/>
            <person name="Geng J."/>
            <person name="Li G."/>
            <person name="Shi J."/>
            <person name="Liu J."/>
            <person name="Lv H."/>
            <person name="Li J."/>
            <person name="Wang J."/>
            <person name="Deng Y."/>
            <person name="Ran L."/>
            <person name="Shi X."/>
            <person name="Wang X."/>
            <person name="Wu Q."/>
            <person name="Li C."/>
            <person name="Ren X."/>
            <person name="Wang J."/>
            <person name="Wang X."/>
            <person name="Li D."/>
            <person name="Liu D."/>
            <person name="Zhang X."/>
            <person name="Ji Z."/>
            <person name="Zhao W."/>
            <person name="Sun Y."/>
            <person name="Zhang Z."/>
            <person name="Bao J."/>
            <person name="Han Y."/>
            <person name="Dong L."/>
            <person name="Ji J."/>
            <person name="Chen P."/>
            <person name="Wu S."/>
            <person name="Liu J."/>
            <person name="Xiao Y."/>
            <person name="Bu D."/>
            <person name="Tan J."/>
            <person name="Yang L."/>
            <person name="Ye C."/>
            <person name="Zhang J."/>
            <person name="Xu J."/>
            <person name="Zhou Y."/>
            <person name="Yu Y."/>
            <person name="Zhang B."/>
            <person name="Zhuang S."/>
            <person name="Wei H."/>
            <person name="Liu B."/>
            <person name="Lei M."/>
            <person name="Yu H."/>
            <person name="Li Y."/>
            <person name="Xu H."/>
            <person name="Wei S."/>
            <person name="He X."/>
            <person name="Fang L."/>
            <person name="Zhang Z."/>
            <person name="Zhang Y."/>
            <person name="Huang X."/>
            <person name="Su Z."/>
            <person name="Tong W."/>
            <person name="Li J."/>
            <person name="Tong Z."/>
            <person name="Li S."/>
            <person name="Ye J."/>
            <person name="Wang L."/>
            <person name="Fang L."/>
            <person name="Lei T."/>
            <person name="Chen C.-S."/>
            <person name="Chen H.-C."/>
            <person name="Xu Z."/>
            <person name="Li H."/>
            <person name="Huang H."/>
            <person name="Zhang F."/>
            <person name="Xu H."/>
            <person name="Li N."/>
            <person name="Zhao C."/>
            <person name="Li S."/>
            <person name="Dong L."/>
            <person name="Huang Y."/>
            <person name="Li L."/>
            <person name="Xi Y."/>
            <person name="Qi Q."/>
            <person name="Li W."/>
            <person name="Zhang B."/>
            <person name="Hu W."/>
            <person name="Zhang Y."/>
            <person name="Tian X."/>
            <person name="Jiao Y."/>
            <person name="Liang X."/>
            <person name="Jin J."/>
            <person name="Gao L."/>
            <person name="Zheng W."/>
            <person name="Hao B."/>
            <person name="Liu S.-M."/>
            <person name="Wang W."/>
            <person name="Yuan L."/>
            <person name="Cao M."/>
            <person name="McDermott J."/>
            <person name="Samudrala R."/>
            <person name="Wang J."/>
            <person name="Wong G.K.-S."/>
            <person name="Yang H."/>
        </authorList>
    </citation>
    <scope>NUCLEOTIDE SEQUENCE [LARGE SCALE GENOMIC DNA]</scope>
    <source>
        <strain>cv. Nipponbare</strain>
    </source>
</reference>
<reference key="7">
    <citation type="journal article" date="2006" name="Mol. Biol. Evol.">
        <title>The shoot stem cell niche in angiosperms: expression patterns of WUS orthologues in rice and maize imply major modifications in the course of mono- and dicot evolution.</title>
        <authorList>
            <person name="Nardmann J."/>
            <person name="Werr W."/>
        </authorList>
    </citation>
    <scope>NUCLEOTIDE SEQUENCE [MRNA] OF 88-152</scope>
</reference>
<reference key="8">
    <citation type="journal article" date="2007" name="Plant Physiol.">
        <title>A WUSCHEL-LIKE HOMEOBOX gene represses a YABBY gene expression required for rice leaf development.</title>
        <authorList>
            <person name="Dai M."/>
            <person name="Hu Y."/>
            <person name="Zhao Y."/>
            <person name="Liu H."/>
            <person name="Zhou D.-X."/>
        </authorList>
    </citation>
    <scope>NOMENCLATURE</scope>
</reference>